<keyword id="KW-0002">3D-structure</keyword>
<keyword id="KW-0967">Endosome</keyword>
<keyword id="KW-0325">Glycoprotein</keyword>
<keyword id="KW-0391">Immunity</keyword>
<keyword id="KW-0395">Inflammatory response</keyword>
<keyword id="KW-0399">Innate immunity</keyword>
<keyword id="KW-0433">Leucine-rich repeat</keyword>
<keyword id="KW-0472">Membrane</keyword>
<keyword id="KW-0520">NAD</keyword>
<keyword id="KW-0675">Receptor</keyword>
<keyword id="KW-1185">Reference proteome</keyword>
<keyword id="KW-0677">Repeat</keyword>
<keyword id="KW-0694">RNA-binding</keyword>
<keyword id="KW-0732">Signal</keyword>
<keyword id="KW-0812">Transmembrane</keyword>
<keyword id="KW-1133">Transmembrane helix</keyword>
<evidence type="ECO:0000250" key="1"/>
<evidence type="ECO:0000250" key="2">
    <source>
        <dbReference type="UniProtKB" id="O00206"/>
    </source>
</evidence>
<evidence type="ECO:0000255" key="3"/>
<evidence type="ECO:0000255" key="4">
    <source>
        <dbReference type="PROSITE-ProRule" id="PRU00204"/>
    </source>
</evidence>
<evidence type="ECO:0000269" key="5">
    <source>
    </source>
</evidence>
<evidence type="ECO:0000269" key="6">
    <source>
    </source>
</evidence>
<evidence type="ECO:0000269" key="7">
    <source>
    </source>
</evidence>
<evidence type="ECO:0000269" key="8">
    <source>
    </source>
</evidence>
<evidence type="ECO:0000305" key="9"/>
<evidence type="ECO:0000305" key="10">
    <source>
    </source>
</evidence>
<evidence type="ECO:0007829" key="11">
    <source>
        <dbReference type="PDB" id="4Z0C"/>
    </source>
</evidence>
<accession>Q6R5N8</accession>
<accession>Q148Y7</accession>
<accession>Q3TDS2</accession>
<gene>
    <name type="primary">Tlr13</name>
</gene>
<sequence>MSGLYRILVQLEQSPYVKTVPLNMRRDFFFLVVTWMPKTVKMNGSSFVPSLQLLLMLVGFSLPPVAETYGFNKCTQYEFDIHHVLCIRKKITNLTEAISDIPRYTTHLNLTHNEIQVLPPWSFTNLSALVDLRLEWNSIWKIDEGAFRGLENLTLLNLVENKIQSVNNSFEGLSSLKTLLLSHNQITHIHKDAFTPLIKLKYLSLSRNNISDFSGILEAVQHLPCLERLDLTNNSIMYLDHSPRSLVSLTHLSFEGNKLRELNFSALSLPNLTNLSASRNGNKVIQNVYLKTLPQLKSLNLSGTVIKLENLSAKHLQNLRAMDLSNWELRHGHLDMKTVCHLLGNLPKLETLVFQKNVTNAEGIKQLAKCTRLLFLDLGQNSDLIYLNDSEFNALPSLQKLNLNKCQLSFINNRTWSSLQNLTSLDLSHNKFKSFPDFAFSPLKHLEFLSLSRNPITELNNLAFSGLFALKELNLAACWIVTIDRYSFTQFPNLEVLDLGDNNIRTLNHGTFRPLKKLQSLILSHNCLKILEPNSFSGLTNLRSLDLMYNSLSYFHEHLFSGLEKLLILKLGFNKITYETTRTLQYPPFIKLKSLKQLNLEGQRHGIQVVPSNFFQGLGSLQELLLGKNPSVFLDHHQFDPLINLTKLDISGTKDGDRSLYLNASLFQNLKRLKILRLENNNLESLVPDMFSSLQSLQVFSLRFNNLKVINQSHLKNLKSLMFFDVYGNKLQCTCDNLWFKNWSMNTEEVHIPFLRSYPCQQPGSQSLLIDFDDAMCNFDLGKVYFLCSFSMVLSTMVFSWFSTKMIASLWYGLYICRAWYLTKWHKTEKKFLYDAFVSFSATDEAWVYKELVPALEQGSQTTFKLCLHQRDFEPGIDIFENIQNAINTSRKTLCVVSNHYLHSEWCRLEVQLASMKMFYEHKDVIILIFLEEIPNYKLSSYHRLRKLINKQTFITWPDSVHQQPLFWARIRNALGKETVEKENTHLIVVE</sequence>
<protein>
    <recommendedName>
        <fullName>Toll-like receptor 13</fullName>
    </recommendedName>
</protein>
<dbReference type="EMBL" id="AY510706">
    <property type="protein sequence ID" value="AAS37674.1"/>
    <property type="molecule type" value="mRNA"/>
</dbReference>
<dbReference type="EMBL" id="AK170044">
    <property type="protein sequence ID" value="BAE41528.1"/>
    <property type="status" value="ALT_INIT"/>
    <property type="molecule type" value="mRNA"/>
</dbReference>
<dbReference type="EMBL" id="AL672288">
    <property type="status" value="NOT_ANNOTATED_CDS"/>
    <property type="molecule type" value="Genomic_DNA"/>
</dbReference>
<dbReference type="EMBL" id="CH466564">
    <property type="protein sequence ID" value="EDL14060.1"/>
    <property type="molecule type" value="Genomic_DNA"/>
</dbReference>
<dbReference type="EMBL" id="BC117913">
    <property type="protein sequence ID" value="AAI17914.1"/>
    <property type="molecule type" value="mRNA"/>
</dbReference>
<dbReference type="EMBL" id="BC117914">
    <property type="protein sequence ID" value="AAI17915.1"/>
    <property type="molecule type" value="mRNA"/>
</dbReference>
<dbReference type="CCDS" id="CCDS30338.1"/>
<dbReference type="RefSeq" id="NP_991389.1">
    <property type="nucleotide sequence ID" value="NM_205820.1"/>
</dbReference>
<dbReference type="PDB" id="4Z0C">
    <property type="method" value="X-ray"/>
    <property type="resolution" value="2.30 A"/>
    <property type="chains" value="A/D=69-777"/>
</dbReference>
<dbReference type="PDBsum" id="4Z0C"/>
<dbReference type="SMR" id="Q6R5N8"/>
<dbReference type="BioGRID" id="235006">
    <property type="interactions" value="1"/>
</dbReference>
<dbReference type="DIP" id="DIP-61832N"/>
<dbReference type="FunCoup" id="Q6R5N8">
    <property type="interactions" value="38"/>
</dbReference>
<dbReference type="STRING" id="10090.ENSMUSP00000043101"/>
<dbReference type="GlyCosmos" id="Q6R5N8">
    <property type="glycosylation" value="20 sites, No reported glycans"/>
</dbReference>
<dbReference type="GlyGen" id="Q6R5N8">
    <property type="glycosylation" value="21 sites, 6 N-linked glycans (15 sites)"/>
</dbReference>
<dbReference type="iPTMnet" id="Q6R5N8"/>
<dbReference type="PhosphoSitePlus" id="Q6R5N8"/>
<dbReference type="PaxDb" id="10090-ENSMUSP00000043101"/>
<dbReference type="PeptideAtlas" id="Q6R5N8"/>
<dbReference type="ProteomicsDB" id="258893"/>
<dbReference type="Pumba" id="Q6R5N8"/>
<dbReference type="DNASU" id="279572"/>
<dbReference type="Ensembl" id="ENSMUST00000040065.4">
    <property type="protein sequence ID" value="ENSMUSP00000043101.4"/>
    <property type="gene ID" value="ENSMUSG00000033777.5"/>
</dbReference>
<dbReference type="GeneID" id="279572"/>
<dbReference type="KEGG" id="mmu:279572"/>
<dbReference type="UCSC" id="uc009ubn.1">
    <property type="organism name" value="mouse"/>
</dbReference>
<dbReference type="AGR" id="MGI:3045213"/>
<dbReference type="CTD" id="279572"/>
<dbReference type="MGI" id="MGI:3045213">
    <property type="gene designation" value="Tlr13"/>
</dbReference>
<dbReference type="VEuPathDB" id="HostDB:ENSMUSG00000033777"/>
<dbReference type="eggNOG" id="KOG4641">
    <property type="taxonomic scope" value="Eukaryota"/>
</dbReference>
<dbReference type="GeneTree" id="ENSGT00950000183593"/>
<dbReference type="HOGENOM" id="CLU_006000_4_0_1"/>
<dbReference type="InParanoid" id="Q6R5N8"/>
<dbReference type="OMA" id="HERPLFW"/>
<dbReference type="OrthoDB" id="1081807at2759"/>
<dbReference type="PhylomeDB" id="Q6R5N8"/>
<dbReference type="TreeFam" id="TF325595"/>
<dbReference type="BioGRID-ORCS" id="279572">
    <property type="hits" value="1 hit in 76 CRISPR screens"/>
</dbReference>
<dbReference type="EvolutionaryTrace" id="Q6R5N8"/>
<dbReference type="PRO" id="PR:Q6R5N8"/>
<dbReference type="Proteomes" id="UP000000589">
    <property type="component" value="Chromosome X"/>
</dbReference>
<dbReference type="RNAct" id="Q6R5N8">
    <property type="molecule type" value="protein"/>
</dbReference>
<dbReference type="Bgee" id="ENSMUSG00000033777">
    <property type="expression patterns" value="Expressed in stroma of bone marrow and 92 other cell types or tissues"/>
</dbReference>
<dbReference type="GO" id="GO:0005737">
    <property type="term" value="C:cytoplasm"/>
    <property type="evidence" value="ECO:0000314"/>
    <property type="project" value="MGI"/>
</dbReference>
<dbReference type="GO" id="GO:0005768">
    <property type="term" value="C:endosome"/>
    <property type="evidence" value="ECO:0000314"/>
    <property type="project" value="UniProtKB"/>
</dbReference>
<dbReference type="GO" id="GO:0010008">
    <property type="term" value="C:endosome membrane"/>
    <property type="evidence" value="ECO:0007669"/>
    <property type="project" value="UniProtKB-SubCell"/>
</dbReference>
<dbReference type="GO" id="GO:0042802">
    <property type="term" value="F:identical protein binding"/>
    <property type="evidence" value="ECO:0000353"/>
    <property type="project" value="IntAct"/>
</dbReference>
<dbReference type="GO" id="GO:0061809">
    <property type="term" value="F:NAD+ nucleosidase activity, cyclic ADP-ribose generating"/>
    <property type="evidence" value="ECO:0007669"/>
    <property type="project" value="UniProtKB-EC"/>
</dbReference>
<dbReference type="GO" id="GO:0019843">
    <property type="term" value="F:rRNA binding"/>
    <property type="evidence" value="ECO:0000314"/>
    <property type="project" value="UniProtKB"/>
</dbReference>
<dbReference type="GO" id="GO:0006954">
    <property type="term" value="P:inflammatory response"/>
    <property type="evidence" value="ECO:0007669"/>
    <property type="project" value="UniProtKB-KW"/>
</dbReference>
<dbReference type="GO" id="GO:0045087">
    <property type="term" value="P:innate immune response"/>
    <property type="evidence" value="ECO:0000314"/>
    <property type="project" value="UniProtKB"/>
</dbReference>
<dbReference type="GO" id="GO:0002755">
    <property type="term" value="P:MyD88-dependent toll-like receptor signaling pathway"/>
    <property type="evidence" value="ECO:0000316"/>
    <property type="project" value="MGI"/>
</dbReference>
<dbReference type="GO" id="GO:0043408">
    <property type="term" value="P:regulation of MAPK cascade"/>
    <property type="evidence" value="ECO:0000316"/>
    <property type="project" value="MGI"/>
</dbReference>
<dbReference type="GO" id="GO:0009615">
    <property type="term" value="P:response to virus"/>
    <property type="evidence" value="ECO:0000315"/>
    <property type="project" value="MGI"/>
</dbReference>
<dbReference type="GO" id="GO:0034178">
    <property type="term" value="P:toll-like receptor 13 signaling pathway"/>
    <property type="evidence" value="ECO:0000314"/>
    <property type="project" value="UniProtKB"/>
</dbReference>
<dbReference type="FunFam" id="3.80.10.10:FF:001643">
    <property type="entry name" value="Toll-like receptor 13"/>
    <property type="match status" value="1"/>
</dbReference>
<dbReference type="FunFam" id="3.80.10.10:FF:001894">
    <property type="entry name" value="Toll-like receptor 13"/>
    <property type="match status" value="1"/>
</dbReference>
<dbReference type="FunFam" id="3.40.50.10140:FF:000001">
    <property type="entry name" value="Toll-like receptor 2"/>
    <property type="match status" value="1"/>
</dbReference>
<dbReference type="Gene3D" id="3.80.10.10">
    <property type="entry name" value="Ribonuclease Inhibitor"/>
    <property type="match status" value="5"/>
</dbReference>
<dbReference type="Gene3D" id="3.40.50.10140">
    <property type="entry name" value="Toll/interleukin-1 receptor homology (TIR) domain"/>
    <property type="match status" value="1"/>
</dbReference>
<dbReference type="InterPro" id="IPR001611">
    <property type="entry name" value="Leu-rich_rpt"/>
</dbReference>
<dbReference type="InterPro" id="IPR025875">
    <property type="entry name" value="Leu-rich_rpt_4"/>
</dbReference>
<dbReference type="InterPro" id="IPR003591">
    <property type="entry name" value="Leu-rich_rpt_typical-subtyp"/>
</dbReference>
<dbReference type="InterPro" id="IPR032675">
    <property type="entry name" value="LRR_dom_sf"/>
</dbReference>
<dbReference type="InterPro" id="IPR000157">
    <property type="entry name" value="TIR_dom"/>
</dbReference>
<dbReference type="InterPro" id="IPR035897">
    <property type="entry name" value="Toll_tir_struct_dom_sf"/>
</dbReference>
<dbReference type="PANTHER" id="PTHR24365">
    <property type="entry name" value="TOLL-LIKE RECEPTOR"/>
    <property type="match status" value="1"/>
</dbReference>
<dbReference type="PANTHER" id="PTHR24365:SF554">
    <property type="entry name" value="TOLL-LIKE RECEPTOR 13"/>
    <property type="match status" value="1"/>
</dbReference>
<dbReference type="Pfam" id="PF12799">
    <property type="entry name" value="LRR_4"/>
    <property type="match status" value="1"/>
</dbReference>
<dbReference type="Pfam" id="PF13855">
    <property type="entry name" value="LRR_8"/>
    <property type="match status" value="4"/>
</dbReference>
<dbReference type="Pfam" id="PF01582">
    <property type="entry name" value="TIR"/>
    <property type="match status" value="1"/>
</dbReference>
<dbReference type="SMART" id="SM00364">
    <property type="entry name" value="LRR_BAC"/>
    <property type="match status" value="4"/>
</dbReference>
<dbReference type="SMART" id="SM00365">
    <property type="entry name" value="LRR_SD22"/>
    <property type="match status" value="11"/>
</dbReference>
<dbReference type="SMART" id="SM00369">
    <property type="entry name" value="LRR_TYP"/>
    <property type="match status" value="18"/>
</dbReference>
<dbReference type="SMART" id="SM00255">
    <property type="entry name" value="TIR"/>
    <property type="match status" value="1"/>
</dbReference>
<dbReference type="SUPFAM" id="SSF52058">
    <property type="entry name" value="L domain-like"/>
    <property type="match status" value="3"/>
</dbReference>
<dbReference type="SUPFAM" id="SSF52200">
    <property type="entry name" value="Toll/Interleukin receptor TIR domain"/>
    <property type="match status" value="1"/>
</dbReference>
<dbReference type="PROSITE" id="PS51450">
    <property type="entry name" value="LRR"/>
    <property type="match status" value="18"/>
</dbReference>
<dbReference type="PROSITE" id="PS50104">
    <property type="entry name" value="TIR"/>
    <property type="match status" value="1"/>
</dbReference>
<comment type="function">
    <text evidence="6 7 8">Component of innate and adaptive immunity that recognizes and binds 23S rRNA from bacteria. TLRs (Toll-like receptors) control host immune response against pathogens through recognition of molecular patterns specific to microorganisms. Acts via MYD88 and TRAF6, leading to NF-kappa-B activation, cytokine secretion and the inflammatory response. Specifically binds the 5'-CGGAAAGACC-3' sequence on bacterial 23S rRNA, a sequence also bound by MLS group antibiotics (including erythromycin). May also recognize vesicular stomatitis virus; however, these data require additional evidences.</text>
</comment>
<comment type="subunit">
    <text evidence="1 5">Binds MYD88 via their respective TIR domains (By similarity). Interacts with UNC93B1.</text>
</comment>
<comment type="interaction">
    <interactant intactId="EBI-16173901">
        <id>Q6R5N8</id>
    </interactant>
    <interactant intactId="EBI-16173901">
        <id>Q6R5N8</id>
        <label>Tlr13</label>
    </interactant>
    <organismsDiffer>false</organismsDiffer>
    <experiments>4</experiments>
</comment>
<comment type="subcellular location">
    <subcellularLocation>
        <location evidence="8">Endosome membrane</location>
        <topology evidence="8">Single-pass type I membrane protein</topology>
    </subcellularLocation>
</comment>
<comment type="miscellaneous">
    <text evidence="10">The sequence 23S rRNA from clinical isolates of erythromycin-resistant S.aureus is methylated and is not recognized by Tlr13 anymore, suggesting a link between antibiotic resistance and evasion from Tlr13 recognition. 23S rRNA modifications generating resistance toward MLS antibiotics preventing recognition of bacteria from Tlr13. These data may also explain why Tlr13 is not conserved in human: human may instead possess a related rRNA-sensing pattern recognition receptor that has evolved to recognize species that can hide from Tlr13 owing to rRNA modifications (PubMed:22821982).</text>
</comment>
<comment type="similarity">
    <text evidence="9">Belongs to the Toll-like receptor family.</text>
</comment>
<comment type="caution">
    <text evidence="2 9">In some plant proteins and in human SARM1, the TIR domain has NAD(+) hydrolase (NADase) activity (By similarity). However, despite the presence of the catalytic Asp residue, the isolated TIR domain of human TLR4 lacks NADase activity (By similarity). Based on this, it is unlikely that Toll-like receptors have NADase activity.</text>
</comment>
<comment type="sequence caution" evidence="9">
    <conflict type="erroneous initiation">
        <sequence resource="EMBL-CDS" id="BAE41528"/>
    </conflict>
    <text>Truncated N-terminus.</text>
</comment>
<feature type="signal peptide" evidence="3">
    <location>
        <begin position="1"/>
        <end position="68"/>
    </location>
</feature>
<feature type="chain" id="PRO_0000042795" description="Toll-like receptor 13">
    <location>
        <begin position="69"/>
        <end position="991"/>
    </location>
</feature>
<feature type="topological domain" description="Extracellular" evidence="3">
    <location>
        <begin position="69"/>
        <end position="783"/>
    </location>
</feature>
<feature type="transmembrane region" description="Helical" evidence="3">
    <location>
        <begin position="784"/>
        <end position="804"/>
    </location>
</feature>
<feature type="topological domain" description="Cytoplasmic" evidence="3">
    <location>
        <begin position="805"/>
        <end position="991"/>
    </location>
</feature>
<feature type="repeat" description="LRR 1">
    <location>
        <begin position="104"/>
        <end position="125"/>
    </location>
</feature>
<feature type="repeat" description="LRR 2">
    <location>
        <begin position="128"/>
        <end position="149"/>
    </location>
</feature>
<feature type="repeat" description="LRR 3">
    <location>
        <begin position="152"/>
        <end position="174"/>
    </location>
</feature>
<feature type="repeat" description="LRR 4">
    <location>
        <begin position="175"/>
        <end position="196"/>
    </location>
</feature>
<feature type="repeat" description="LRR 5">
    <location>
        <begin position="199"/>
        <end position="220"/>
    </location>
</feature>
<feature type="repeat" description="LRR 6">
    <location>
        <begin position="225"/>
        <end position="246"/>
    </location>
</feature>
<feature type="repeat" description="LRR 7">
    <location>
        <begin position="248"/>
        <end position="268"/>
    </location>
</feature>
<feature type="repeat" description="LRR 8">
    <location>
        <begin position="271"/>
        <end position="292"/>
    </location>
</feature>
<feature type="repeat" description="LRR 9">
    <location>
        <begin position="295"/>
        <end position="315"/>
    </location>
</feature>
<feature type="repeat" description="LRR 10">
    <location>
        <begin position="318"/>
        <end position="338"/>
    </location>
</feature>
<feature type="repeat" description="LRR 11">
    <location>
        <begin position="348"/>
        <end position="368"/>
    </location>
</feature>
<feature type="repeat" description="LRR 12">
    <location>
        <begin position="372"/>
        <end position="394"/>
    </location>
</feature>
<feature type="repeat" description="LRR 13">
    <location>
        <begin position="397"/>
        <end position="418"/>
    </location>
</feature>
<feature type="repeat" description="LRR 14">
    <location>
        <begin position="421"/>
        <end position="442"/>
    </location>
</feature>
<feature type="repeat" description="LRR 15">
    <location>
        <begin position="445"/>
        <end position="466"/>
    </location>
</feature>
<feature type="repeat" description="LRR 16">
    <location>
        <begin position="469"/>
        <end position="490"/>
    </location>
</feature>
<feature type="repeat" description="LRR 17">
    <location>
        <begin position="493"/>
        <end position="514"/>
    </location>
</feature>
<feature type="repeat" description="LRR 18">
    <location>
        <begin position="517"/>
        <end position="538"/>
    </location>
</feature>
<feature type="repeat" description="LRR 19">
    <location>
        <begin position="541"/>
        <end position="562"/>
    </location>
</feature>
<feature type="repeat" description="LRR 20">
    <location>
        <begin position="565"/>
        <end position="585"/>
    </location>
</feature>
<feature type="repeat" description="LRR 21">
    <location>
        <begin position="594"/>
        <end position="617"/>
    </location>
</feature>
<feature type="repeat" description="LRR 22">
    <location>
        <begin position="620"/>
        <end position="641"/>
    </location>
</feature>
<feature type="repeat" description="LRR 23">
    <location>
        <begin position="644"/>
        <end position="665"/>
    </location>
</feature>
<feature type="repeat" description="LRR 24">
    <location>
        <begin position="672"/>
        <end position="693"/>
    </location>
</feature>
<feature type="repeat" description="LRR 25">
    <location>
        <begin position="696"/>
        <end position="716"/>
    </location>
</feature>
<feature type="domain" description="LRRCT">
    <location>
        <begin position="729"/>
        <end position="779"/>
    </location>
</feature>
<feature type="domain" description="TIR" evidence="4">
    <location>
        <begin position="832"/>
        <end position="975"/>
    </location>
</feature>
<feature type="glycosylation site" description="N-linked (GlcNAc...) asparagine" evidence="3">
    <location>
        <position position="93"/>
    </location>
</feature>
<feature type="glycosylation site" description="N-linked (GlcNAc...) asparagine" evidence="3">
    <location>
        <position position="109"/>
    </location>
</feature>
<feature type="glycosylation site" description="N-linked (GlcNAc...) asparagine" evidence="3">
    <location>
        <position position="125"/>
    </location>
</feature>
<feature type="glycosylation site" description="N-linked (GlcNAc...) asparagine" evidence="3">
    <location>
        <position position="152"/>
    </location>
</feature>
<feature type="glycosylation site" description="N-linked (GlcNAc...) asparagine" evidence="3">
    <location>
        <position position="167"/>
    </location>
</feature>
<feature type="glycosylation site" description="N-linked (GlcNAc...) asparagine" evidence="3">
    <location>
        <position position="209"/>
    </location>
</feature>
<feature type="glycosylation site" description="N-linked (GlcNAc...) asparagine" evidence="3">
    <location>
        <position position="233"/>
    </location>
</feature>
<feature type="glycosylation site" description="N-linked (GlcNAc...) asparagine" evidence="3">
    <location>
        <position position="263"/>
    </location>
</feature>
<feature type="glycosylation site" description="N-linked (GlcNAc...) asparagine" evidence="3">
    <location>
        <position position="271"/>
    </location>
</feature>
<feature type="glycosylation site" description="N-linked (GlcNAc...) asparagine" evidence="3">
    <location>
        <position position="274"/>
    </location>
</feature>
<feature type="glycosylation site" description="N-linked (GlcNAc...) asparagine" evidence="3">
    <location>
        <position position="300"/>
    </location>
</feature>
<feature type="glycosylation site" description="N-linked (GlcNAc...) asparagine" evidence="3">
    <location>
        <position position="310"/>
    </location>
</feature>
<feature type="glycosylation site" description="N-linked (GlcNAc...) asparagine" evidence="3">
    <location>
        <position position="357"/>
    </location>
</feature>
<feature type="glycosylation site" description="N-linked (GlcNAc...) asparagine" evidence="3">
    <location>
        <position position="388"/>
    </location>
</feature>
<feature type="glycosylation site" description="N-linked (GlcNAc...) asparagine" evidence="3">
    <location>
        <position position="413"/>
    </location>
</feature>
<feature type="glycosylation site" description="N-linked (GlcNAc...) asparagine" evidence="3">
    <location>
        <position position="421"/>
    </location>
</feature>
<feature type="glycosylation site" description="N-linked (GlcNAc...) asparagine" evidence="3">
    <location>
        <position position="644"/>
    </location>
</feature>
<feature type="glycosylation site" description="N-linked (GlcNAc...) asparagine" evidence="3">
    <location>
        <position position="663"/>
    </location>
</feature>
<feature type="glycosylation site" description="N-linked (GlcNAc...) asparagine" evidence="3">
    <location>
        <position position="711"/>
    </location>
</feature>
<feature type="glycosylation site" description="N-linked (GlcNAc...) asparagine" evidence="3">
    <location>
        <position position="742"/>
    </location>
</feature>
<feature type="strand" evidence="11">
    <location>
        <begin position="75"/>
        <end position="77"/>
    </location>
</feature>
<feature type="strand" evidence="11">
    <location>
        <begin position="80"/>
        <end position="85"/>
    </location>
</feature>
<feature type="helix" evidence="11">
    <location>
        <begin position="94"/>
        <end position="98"/>
    </location>
</feature>
<feature type="strand" evidence="11">
    <location>
        <begin position="107"/>
        <end position="109"/>
    </location>
</feature>
<feature type="turn" evidence="11">
    <location>
        <begin position="120"/>
        <end position="125"/>
    </location>
</feature>
<feature type="strand" evidence="11">
    <location>
        <begin position="131"/>
        <end position="133"/>
    </location>
</feature>
<feature type="turn" evidence="11">
    <location>
        <begin position="144"/>
        <end position="149"/>
    </location>
</feature>
<feature type="strand" evidence="11">
    <location>
        <begin position="155"/>
        <end position="157"/>
    </location>
</feature>
<feature type="strand" evidence="11">
    <location>
        <begin position="178"/>
        <end position="180"/>
    </location>
</feature>
<feature type="turn" evidence="11">
    <location>
        <begin position="191"/>
        <end position="196"/>
    </location>
</feature>
<feature type="strand" evidence="11">
    <location>
        <begin position="202"/>
        <end position="204"/>
    </location>
</feature>
<feature type="helix" evidence="11">
    <location>
        <begin position="213"/>
        <end position="220"/>
    </location>
</feature>
<feature type="strand" evidence="11">
    <location>
        <begin position="228"/>
        <end position="230"/>
    </location>
</feature>
<feature type="strand" evidence="11">
    <location>
        <begin position="251"/>
        <end position="253"/>
    </location>
</feature>
<feature type="strand" evidence="11">
    <location>
        <begin position="274"/>
        <end position="276"/>
    </location>
</feature>
<feature type="strand" evidence="11">
    <location>
        <begin position="298"/>
        <end position="300"/>
    </location>
</feature>
<feature type="helix" evidence="11">
    <location>
        <begin position="308"/>
        <end position="310"/>
    </location>
</feature>
<feature type="helix" evidence="11">
    <location>
        <begin position="313"/>
        <end position="316"/>
    </location>
</feature>
<feature type="strand" evidence="11">
    <location>
        <begin position="321"/>
        <end position="323"/>
    </location>
</feature>
<feature type="helix" evidence="11">
    <location>
        <begin position="329"/>
        <end position="331"/>
    </location>
</feature>
<feature type="helix" evidence="11">
    <location>
        <begin position="336"/>
        <end position="343"/>
    </location>
</feature>
<feature type="strand" evidence="11">
    <location>
        <begin position="351"/>
        <end position="353"/>
    </location>
</feature>
<feature type="helix" evidence="11">
    <location>
        <begin position="361"/>
        <end position="370"/>
    </location>
</feature>
<feature type="strand" evidence="11">
    <location>
        <begin position="374"/>
        <end position="377"/>
    </location>
</feature>
<feature type="turn" evidence="11">
    <location>
        <begin position="391"/>
        <end position="394"/>
    </location>
</feature>
<feature type="strand" evidence="11">
    <location>
        <begin position="399"/>
        <end position="402"/>
    </location>
</feature>
<feature type="strand" evidence="11">
    <location>
        <begin position="424"/>
        <end position="426"/>
    </location>
</feature>
<feature type="turn" evidence="11">
    <location>
        <begin position="437"/>
        <end position="442"/>
    </location>
</feature>
<feature type="strand" evidence="11">
    <location>
        <begin position="448"/>
        <end position="450"/>
    </location>
</feature>
<feature type="helix" evidence="11">
    <location>
        <begin position="461"/>
        <end position="464"/>
    </location>
</feature>
<feature type="strand" evidence="11">
    <location>
        <begin position="472"/>
        <end position="474"/>
    </location>
</feature>
<feature type="strand" evidence="11">
    <location>
        <begin position="496"/>
        <end position="498"/>
    </location>
</feature>
<feature type="turn" evidence="11">
    <location>
        <begin position="509"/>
        <end position="514"/>
    </location>
</feature>
<feature type="strand" evidence="11">
    <location>
        <begin position="520"/>
        <end position="522"/>
    </location>
</feature>
<feature type="turn" evidence="11">
    <location>
        <begin position="533"/>
        <end position="538"/>
    </location>
</feature>
<feature type="strand" evidence="11">
    <location>
        <begin position="544"/>
        <end position="546"/>
    </location>
</feature>
<feature type="turn" evidence="11">
    <location>
        <begin position="557"/>
        <end position="562"/>
    </location>
</feature>
<feature type="strand" evidence="11">
    <location>
        <begin position="568"/>
        <end position="570"/>
    </location>
</feature>
<feature type="strand" evidence="11">
    <location>
        <begin position="578"/>
        <end position="580"/>
    </location>
</feature>
<feature type="turn" evidence="11">
    <location>
        <begin position="588"/>
        <end position="591"/>
    </location>
</feature>
<feature type="strand" evidence="11">
    <location>
        <begin position="597"/>
        <end position="599"/>
    </location>
</feature>
<feature type="turn" evidence="11">
    <location>
        <begin position="612"/>
        <end position="617"/>
    </location>
</feature>
<feature type="strand" evidence="11">
    <location>
        <begin position="623"/>
        <end position="625"/>
    </location>
</feature>
<feature type="strand" evidence="11">
    <location>
        <begin position="632"/>
        <end position="634"/>
    </location>
</feature>
<feature type="turn" evidence="11">
    <location>
        <begin position="638"/>
        <end position="641"/>
    </location>
</feature>
<feature type="strand" evidence="11">
    <location>
        <begin position="647"/>
        <end position="649"/>
    </location>
</feature>
<feature type="helix" evidence="11">
    <location>
        <begin position="656"/>
        <end position="659"/>
    </location>
</feature>
<feature type="strand" evidence="11">
    <location>
        <begin position="660"/>
        <end position="662"/>
    </location>
</feature>
<feature type="turn" evidence="11">
    <location>
        <begin position="664"/>
        <end position="669"/>
    </location>
</feature>
<feature type="strand" evidence="11">
    <location>
        <begin position="675"/>
        <end position="677"/>
    </location>
</feature>
<feature type="strand" evidence="11">
    <location>
        <begin position="699"/>
        <end position="701"/>
    </location>
</feature>
<feature type="turn" evidence="11">
    <location>
        <begin position="712"/>
        <end position="717"/>
    </location>
</feature>
<feature type="strand" evidence="11">
    <location>
        <begin position="723"/>
        <end position="725"/>
    </location>
</feature>
<feature type="helix" evidence="11">
    <location>
        <begin position="735"/>
        <end position="737"/>
    </location>
</feature>
<feature type="helix" evidence="11">
    <location>
        <begin position="738"/>
        <end position="746"/>
    </location>
</feature>
<feature type="helix" evidence="11">
    <location>
        <begin position="755"/>
        <end position="757"/>
    </location>
</feature>
<feature type="helix" evidence="11">
    <location>
        <begin position="769"/>
        <end position="771"/>
    </location>
</feature>
<feature type="helix" evidence="11">
    <location>
        <begin position="774"/>
        <end position="776"/>
    </location>
</feature>
<proteinExistence type="evidence at protein level"/>
<organism>
    <name type="scientific">Mus musculus</name>
    <name type="common">Mouse</name>
    <dbReference type="NCBI Taxonomy" id="10090"/>
    <lineage>
        <taxon>Eukaryota</taxon>
        <taxon>Metazoa</taxon>
        <taxon>Chordata</taxon>
        <taxon>Craniata</taxon>
        <taxon>Vertebrata</taxon>
        <taxon>Euteleostomi</taxon>
        <taxon>Mammalia</taxon>
        <taxon>Eutheria</taxon>
        <taxon>Euarchontoglires</taxon>
        <taxon>Glires</taxon>
        <taxon>Rodentia</taxon>
        <taxon>Myomorpha</taxon>
        <taxon>Muroidea</taxon>
        <taxon>Muridae</taxon>
        <taxon>Murinae</taxon>
        <taxon>Mus</taxon>
        <taxon>Mus</taxon>
    </lineage>
</organism>
<reference key="1">
    <citation type="journal article" date="2004" name="Proc. Natl. Acad. Sci. U.S.A.">
        <title>Toll-like receptors 9 and 3 as essential components of innate immune defense against mouse cytomegalovirus infection.</title>
        <authorList>
            <person name="Tabeta K."/>
            <person name="Georgel P."/>
            <person name="Janssen E."/>
            <person name="Du X."/>
            <person name="Hoebe K."/>
            <person name="Crozat K."/>
            <person name="Mudd S."/>
            <person name="Shamel L."/>
            <person name="Sovath S."/>
            <person name="Goode J."/>
            <person name="Alexopoulou L."/>
            <person name="Flavell R.A."/>
            <person name="Beutler B."/>
        </authorList>
    </citation>
    <scope>NUCLEOTIDE SEQUENCE [MRNA]</scope>
    <source>
        <strain>C57BL/6J</strain>
    </source>
</reference>
<reference key="2">
    <citation type="journal article" date="2005" name="Science">
        <title>The transcriptional landscape of the mammalian genome.</title>
        <authorList>
            <person name="Carninci P."/>
            <person name="Kasukawa T."/>
            <person name="Katayama S."/>
            <person name="Gough J."/>
            <person name="Frith M.C."/>
            <person name="Maeda N."/>
            <person name="Oyama R."/>
            <person name="Ravasi T."/>
            <person name="Lenhard B."/>
            <person name="Wells C."/>
            <person name="Kodzius R."/>
            <person name="Shimokawa K."/>
            <person name="Bajic V.B."/>
            <person name="Brenner S.E."/>
            <person name="Batalov S."/>
            <person name="Forrest A.R."/>
            <person name="Zavolan M."/>
            <person name="Davis M.J."/>
            <person name="Wilming L.G."/>
            <person name="Aidinis V."/>
            <person name="Allen J.E."/>
            <person name="Ambesi-Impiombato A."/>
            <person name="Apweiler R."/>
            <person name="Aturaliya R.N."/>
            <person name="Bailey T.L."/>
            <person name="Bansal M."/>
            <person name="Baxter L."/>
            <person name="Beisel K.W."/>
            <person name="Bersano T."/>
            <person name="Bono H."/>
            <person name="Chalk A.M."/>
            <person name="Chiu K.P."/>
            <person name="Choudhary V."/>
            <person name="Christoffels A."/>
            <person name="Clutterbuck D.R."/>
            <person name="Crowe M.L."/>
            <person name="Dalla E."/>
            <person name="Dalrymple B.P."/>
            <person name="de Bono B."/>
            <person name="Della Gatta G."/>
            <person name="di Bernardo D."/>
            <person name="Down T."/>
            <person name="Engstrom P."/>
            <person name="Fagiolini M."/>
            <person name="Faulkner G."/>
            <person name="Fletcher C.F."/>
            <person name="Fukushima T."/>
            <person name="Furuno M."/>
            <person name="Futaki S."/>
            <person name="Gariboldi M."/>
            <person name="Georgii-Hemming P."/>
            <person name="Gingeras T.R."/>
            <person name="Gojobori T."/>
            <person name="Green R.E."/>
            <person name="Gustincich S."/>
            <person name="Harbers M."/>
            <person name="Hayashi Y."/>
            <person name="Hensch T.K."/>
            <person name="Hirokawa N."/>
            <person name="Hill D."/>
            <person name="Huminiecki L."/>
            <person name="Iacono M."/>
            <person name="Ikeo K."/>
            <person name="Iwama A."/>
            <person name="Ishikawa T."/>
            <person name="Jakt M."/>
            <person name="Kanapin A."/>
            <person name="Katoh M."/>
            <person name="Kawasawa Y."/>
            <person name="Kelso J."/>
            <person name="Kitamura H."/>
            <person name="Kitano H."/>
            <person name="Kollias G."/>
            <person name="Krishnan S.P."/>
            <person name="Kruger A."/>
            <person name="Kummerfeld S.K."/>
            <person name="Kurochkin I.V."/>
            <person name="Lareau L.F."/>
            <person name="Lazarevic D."/>
            <person name="Lipovich L."/>
            <person name="Liu J."/>
            <person name="Liuni S."/>
            <person name="McWilliam S."/>
            <person name="Madan Babu M."/>
            <person name="Madera M."/>
            <person name="Marchionni L."/>
            <person name="Matsuda H."/>
            <person name="Matsuzawa S."/>
            <person name="Miki H."/>
            <person name="Mignone F."/>
            <person name="Miyake S."/>
            <person name="Morris K."/>
            <person name="Mottagui-Tabar S."/>
            <person name="Mulder N."/>
            <person name="Nakano N."/>
            <person name="Nakauchi H."/>
            <person name="Ng P."/>
            <person name="Nilsson R."/>
            <person name="Nishiguchi S."/>
            <person name="Nishikawa S."/>
            <person name="Nori F."/>
            <person name="Ohara O."/>
            <person name="Okazaki Y."/>
            <person name="Orlando V."/>
            <person name="Pang K.C."/>
            <person name="Pavan W.J."/>
            <person name="Pavesi G."/>
            <person name="Pesole G."/>
            <person name="Petrovsky N."/>
            <person name="Piazza S."/>
            <person name="Reed J."/>
            <person name="Reid J.F."/>
            <person name="Ring B.Z."/>
            <person name="Ringwald M."/>
            <person name="Rost B."/>
            <person name="Ruan Y."/>
            <person name="Salzberg S.L."/>
            <person name="Sandelin A."/>
            <person name="Schneider C."/>
            <person name="Schoenbach C."/>
            <person name="Sekiguchi K."/>
            <person name="Semple C.A."/>
            <person name="Seno S."/>
            <person name="Sessa L."/>
            <person name="Sheng Y."/>
            <person name="Shibata Y."/>
            <person name="Shimada H."/>
            <person name="Shimada K."/>
            <person name="Silva D."/>
            <person name="Sinclair B."/>
            <person name="Sperling S."/>
            <person name="Stupka E."/>
            <person name="Sugiura K."/>
            <person name="Sultana R."/>
            <person name="Takenaka Y."/>
            <person name="Taki K."/>
            <person name="Tammoja K."/>
            <person name="Tan S.L."/>
            <person name="Tang S."/>
            <person name="Taylor M.S."/>
            <person name="Tegner J."/>
            <person name="Teichmann S.A."/>
            <person name="Ueda H.R."/>
            <person name="van Nimwegen E."/>
            <person name="Verardo R."/>
            <person name="Wei C.L."/>
            <person name="Yagi K."/>
            <person name="Yamanishi H."/>
            <person name="Zabarovsky E."/>
            <person name="Zhu S."/>
            <person name="Zimmer A."/>
            <person name="Hide W."/>
            <person name="Bult C."/>
            <person name="Grimmond S.M."/>
            <person name="Teasdale R.D."/>
            <person name="Liu E.T."/>
            <person name="Brusic V."/>
            <person name="Quackenbush J."/>
            <person name="Wahlestedt C."/>
            <person name="Mattick J.S."/>
            <person name="Hume D.A."/>
            <person name="Kai C."/>
            <person name="Sasaki D."/>
            <person name="Tomaru Y."/>
            <person name="Fukuda S."/>
            <person name="Kanamori-Katayama M."/>
            <person name="Suzuki M."/>
            <person name="Aoki J."/>
            <person name="Arakawa T."/>
            <person name="Iida J."/>
            <person name="Imamura K."/>
            <person name="Itoh M."/>
            <person name="Kato T."/>
            <person name="Kawaji H."/>
            <person name="Kawagashira N."/>
            <person name="Kawashima T."/>
            <person name="Kojima M."/>
            <person name="Kondo S."/>
            <person name="Konno H."/>
            <person name="Nakano K."/>
            <person name="Ninomiya N."/>
            <person name="Nishio T."/>
            <person name="Okada M."/>
            <person name="Plessy C."/>
            <person name="Shibata K."/>
            <person name="Shiraki T."/>
            <person name="Suzuki S."/>
            <person name="Tagami M."/>
            <person name="Waki K."/>
            <person name="Watahiki A."/>
            <person name="Okamura-Oho Y."/>
            <person name="Suzuki H."/>
            <person name="Kawai J."/>
            <person name="Hayashizaki Y."/>
        </authorList>
    </citation>
    <scope>NUCLEOTIDE SEQUENCE [LARGE SCALE MRNA] OF 1-682</scope>
</reference>
<reference key="3">
    <citation type="journal article" date="2009" name="PLoS Biol.">
        <title>Lineage-specific biology revealed by a finished genome assembly of the mouse.</title>
        <authorList>
            <person name="Church D.M."/>
            <person name="Goodstadt L."/>
            <person name="Hillier L.W."/>
            <person name="Zody M.C."/>
            <person name="Goldstein S."/>
            <person name="She X."/>
            <person name="Bult C.J."/>
            <person name="Agarwala R."/>
            <person name="Cherry J.L."/>
            <person name="DiCuccio M."/>
            <person name="Hlavina W."/>
            <person name="Kapustin Y."/>
            <person name="Meric P."/>
            <person name="Maglott D."/>
            <person name="Birtle Z."/>
            <person name="Marques A.C."/>
            <person name="Graves T."/>
            <person name="Zhou S."/>
            <person name="Teague B."/>
            <person name="Potamousis K."/>
            <person name="Churas C."/>
            <person name="Place M."/>
            <person name="Herschleb J."/>
            <person name="Runnheim R."/>
            <person name="Forrest D."/>
            <person name="Amos-Landgraf J."/>
            <person name="Schwartz D.C."/>
            <person name="Cheng Z."/>
            <person name="Lindblad-Toh K."/>
            <person name="Eichler E.E."/>
            <person name="Ponting C.P."/>
        </authorList>
    </citation>
    <scope>NUCLEOTIDE SEQUENCE [LARGE SCALE GENOMIC DNA]</scope>
    <source>
        <strain>C57BL/6J</strain>
    </source>
</reference>
<reference key="4">
    <citation type="submission" date="2005-07" db="EMBL/GenBank/DDBJ databases">
        <authorList>
            <person name="Mural R.J."/>
            <person name="Adams M.D."/>
            <person name="Myers E.W."/>
            <person name="Smith H.O."/>
            <person name="Venter J.C."/>
        </authorList>
    </citation>
    <scope>NUCLEOTIDE SEQUENCE [LARGE SCALE GENOMIC DNA]</scope>
</reference>
<reference key="5">
    <citation type="journal article" date="2004" name="Genome Res.">
        <title>The status, quality, and expansion of the NIH full-length cDNA project: the Mammalian Gene Collection (MGC).</title>
        <authorList>
            <consortium name="The MGC Project Team"/>
        </authorList>
    </citation>
    <scope>NUCLEOTIDE SEQUENCE [LARGE SCALE MRNA]</scope>
</reference>
<reference key="6">
    <citation type="journal article" date="2007" name="J. Cell Biol.">
        <title>The interaction between the ER membrane protein UNC93B and TLR3, 7, and 9 is crucial for TLR signaling.</title>
        <authorList>
            <person name="Brinkmann M.M."/>
            <person name="Spooner E."/>
            <person name="Hoebe K."/>
            <person name="Beutler B."/>
            <person name="Ploegh H.L."/>
            <person name="Kim Y.M."/>
        </authorList>
    </citation>
    <scope>IDENTIFICATION BY MASS SPECTROMETRY</scope>
    <scope>INTERACTION WITH UNC93B1</scope>
</reference>
<reference key="7">
    <citation type="journal article" date="2011" name="J. Biol. Chem.">
        <title>A novel Toll-like receptor that recognizes vesicular stomatitis virus.</title>
        <authorList>
            <person name="Shi Z."/>
            <person name="Cai Z."/>
            <person name="Sanchez A."/>
            <person name="Zhang T."/>
            <person name="Wen S."/>
            <person name="Wang J."/>
            <person name="Yang J."/>
            <person name="Fu S."/>
            <person name="Zhang D."/>
        </authorList>
    </citation>
    <scope>FUNCTION</scope>
</reference>
<reference key="8">
    <citation type="journal article" date="2012" name="Science">
        <title>TLR13 recognizes bacterial 23S rRNA devoid of erythromycin resistance-forming modification.</title>
        <authorList>
            <person name="Oldenburg M."/>
            <person name="Kruger A."/>
            <person name="Ferstl R."/>
            <person name="Kaufmann A."/>
            <person name="Nees G."/>
            <person name="Sigmund A."/>
            <person name="Bathke B."/>
            <person name="Lauterbach H."/>
            <person name="Suter M."/>
            <person name="Dreher S."/>
            <person name="Koedel U."/>
            <person name="Akira S."/>
            <person name="Kawai T."/>
            <person name="Buer J."/>
            <person name="Wagner H."/>
            <person name="Bauer S."/>
            <person name="Hochrein H."/>
            <person name="Kirschning C.J."/>
        </authorList>
    </citation>
    <scope>FUNCTION</scope>
    <scope>RNA-BINDING</scope>
</reference>
<reference key="9">
    <citation type="journal article" date="2012" name="J. Immunol.">
        <title>TLR13 Is a Receptor for Bacterial RNA.</title>
        <authorList>
            <person name="Hidmark A."/>
            <person name="von Saint Paul A."/>
            <person name="Dalpke A.H."/>
        </authorList>
    </citation>
    <scope>FUNCTION</scope>
    <scope>RNA-BINDING</scope>
    <scope>SUBCELLULAR LOCATION</scope>
</reference>
<name>TLR13_MOUSE</name>